<organism>
    <name type="scientific">Escherichia coli (strain K12 / MC4100 / BW2952)</name>
    <dbReference type="NCBI Taxonomy" id="595496"/>
    <lineage>
        <taxon>Bacteria</taxon>
        <taxon>Pseudomonadati</taxon>
        <taxon>Pseudomonadota</taxon>
        <taxon>Gammaproteobacteria</taxon>
        <taxon>Enterobacterales</taxon>
        <taxon>Enterobacteriaceae</taxon>
        <taxon>Escherichia</taxon>
    </lineage>
</organism>
<sequence>MPQISRYSDEQVEQLLAELLNVLEKHKAPTDLSLMVLGNMVTNLINTSIAPAQRQAIANSFARALQSSINEDKAH</sequence>
<comment type="similarity">
    <text evidence="1">Belongs to the UPF0352 family.</text>
</comment>
<accession>C4ZU32</accession>
<feature type="chain" id="PRO_1000213051" description="UPF0352 protein YejL">
    <location>
        <begin position="1"/>
        <end position="75"/>
    </location>
</feature>
<gene>
    <name evidence="1" type="primary">yejL</name>
    <name type="ordered locus">BWG_1963</name>
</gene>
<name>YEJL_ECOBW</name>
<protein>
    <recommendedName>
        <fullName evidence="1">UPF0352 protein YejL</fullName>
    </recommendedName>
</protein>
<dbReference type="EMBL" id="CP001396">
    <property type="protein sequence ID" value="ACR62504.1"/>
    <property type="molecule type" value="Genomic_DNA"/>
</dbReference>
<dbReference type="RefSeq" id="WP_001135667.1">
    <property type="nucleotide sequence ID" value="NC_012759.1"/>
</dbReference>
<dbReference type="SMR" id="C4ZU32"/>
<dbReference type="KEGG" id="ebw:BWG_1963"/>
<dbReference type="HOGENOM" id="CLU_175457_0_0_6"/>
<dbReference type="FunFam" id="1.10.3390.10:FF:000001">
    <property type="entry name" value="UPF0352 protein YejL"/>
    <property type="match status" value="1"/>
</dbReference>
<dbReference type="Gene3D" id="1.10.3390.10">
    <property type="entry name" value="YejL-like"/>
    <property type="match status" value="1"/>
</dbReference>
<dbReference type="HAMAP" id="MF_00816">
    <property type="entry name" value="UPF0352"/>
    <property type="match status" value="1"/>
</dbReference>
<dbReference type="InterPro" id="IPR009857">
    <property type="entry name" value="UPF0352"/>
</dbReference>
<dbReference type="InterPro" id="IPR023202">
    <property type="entry name" value="YejL_sf"/>
</dbReference>
<dbReference type="NCBIfam" id="NF010242">
    <property type="entry name" value="PRK13689.1"/>
    <property type="match status" value="1"/>
</dbReference>
<dbReference type="Pfam" id="PF07208">
    <property type="entry name" value="DUF1414"/>
    <property type="match status" value="1"/>
</dbReference>
<dbReference type="PIRSF" id="PIRSF006188">
    <property type="entry name" value="UCP006188"/>
    <property type="match status" value="1"/>
</dbReference>
<dbReference type="SUPFAM" id="SSF158651">
    <property type="entry name" value="YejL-like"/>
    <property type="match status" value="1"/>
</dbReference>
<proteinExistence type="inferred from homology"/>
<reference key="1">
    <citation type="journal article" date="2009" name="J. Bacteriol.">
        <title>Genomic sequencing reveals regulatory mutations and recombinational events in the widely used MC4100 lineage of Escherichia coli K-12.</title>
        <authorList>
            <person name="Ferenci T."/>
            <person name="Zhou Z."/>
            <person name="Betteridge T."/>
            <person name="Ren Y."/>
            <person name="Liu Y."/>
            <person name="Feng L."/>
            <person name="Reeves P.R."/>
            <person name="Wang L."/>
        </authorList>
    </citation>
    <scope>NUCLEOTIDE SEQUENCE [LARGE SCALE GENOMIC DNA]</scope>
    <source>
        <strain>K12 / MC4100 / BW2952</strain>
    </source>
</reference>
<evidence type="ECO:0000255" key="1">
    <source>
        <dbReference type="HAMAP-Rule" id="MF_00816"/>
    </source>
</evidence>